<feature type="chain" id="PRO_1000046991" description="Endonuclease V">
    <location>
        <begin position="1"/>
        <end position="221"/>
    </location>
</feature>
<feature type="binding site" evidence="1">
    <location>
        <position position="44"/>
    </location>
    <ligand>
        <name>Mg(2+)</name>
        <dbReference type="ChEBI" id="CHEBI:18420"/>
    </ligand>
</feature>
<feature type="binding site" evidence="1">
    <location>
        <position position="112"/>
    </location>
    <ligand>
        <name>Mg(2+)</name>
        <dbReference type="ChEBI" id="CHEBI:18420"/>
    </ligand>
</feature>
<feature type="site" description="Interaction with target DNA" evidence="1">
    <location>
        <position position="82"/>
    </location>
</feature>
<comment type="function">
    <text evidence="1">DNA repair enzyme involved in the repair of deaminated bases. Selectively cleaves double-stranded DNA at the second phosphodiester bond 3' to a deoxyinosine leaving behind the intact lesion on the nicked DNA.</text>
</comment>
<comment type="catalytic activity">
    <reaction evidence="1">
        <text>Endonucleolytic cleavage at apurinic or apyrimidinic sites to products with a 5'-phosphate.</text>
        <dbReference type="EC" id="3.1.21.7"/>
    </reaction>
</comment>
<comment type="cofactor">
    <cofactor evidence="1">
        <name>Mg(2+)</name>
        <dbReference type="ChEBI" id="CHEBI:18420"/>
    </cofactor>
</comment>
<comment type="subcellular location">
    <subcellularLocation>
        <location evidence="1">Cytoplasm</location>
    </subcellularLocation>
</comment>
<comment type="similarity">
    <text evidence="1">Belongs to the endonuclease V family.</text>
</comment>
<keyword id="KW-0963">Cytoplasm</keyword>
<keyword id="KW-0227">DNA damage</keyword>
<keyword id="KW-0234">DNA repair</keyword>
<keyword id="KW-0255">Endonuclease</keyword>
<keyword id="KW-0378">Hydrolase</keyword>
<keyword id="KW-0460">Magnesium</keyword>
<keyword id="KW-0479">Metal-binding</keyword>
<keyword id="KW-0540">Nuclease</keyword>
<gene>
    <name evidence="1" type="primary">nfi</name>
    <name type="ordered locus">Ava_0819</name>
</gene>
<sequence length="221" mass="24435">MQIYQPHPWPLTVEEAITIQEELRHQVITQDQFTQPVQYVAGVDMGFEADGTISRAAVAVLSFPDLQVVETSLAYRPTSFPYIPGFLSFREIPAVLDALEKIQTKPDIILCDGQGIAHPRRLGIASHLGVLLNIPTIGVAKSLLIGRHEELADTKGSWQPLIHRGEIIGAVLRTRVGVKPVYVSSGHKISLPTAIDYVLRCTPKYRLPETTRVADKLASNR</sequence>
<name>NFI_TRIV2</name>
<organism>
    <name type="scientific">Trichormus variabilis (strain ATCC 29413 / PCC 7937)</name>
    <name type="common">Anabaena variabilis</name>
    <dbReference type="NCBI Taxonomy" id="240292"/>
    <lineage>
        <taxon>Bacteria</taxon>
        <taxon>Bacillati</taxon>
        <taxon>Cyanobacteriota</taxon>
        <taxon>Cyanophyceae</taxon>
        <taxon>Nostocales</taxon>
        <taxon>Nostocaceae</taxon>
        <taxon>Trichormus</taxon>
    </lineage>
</organism>
<protein>
    <recommendedName>
        <fullName evidence="1">Endonuclease V</fullName>
        <ecNumber evidence="1">3.1.21.7</ecNumber>
    </recommendedName>
    <alternativeName>
        <fullName evidence="1">Deoxyinosine 3'endonuclease</fullName>
    </alternativeName>
    <alternativeName>
        <fullName evidence="1">Deoxyribonuclease V</fullName>
        <shortName evidence="1">DNase V</shortName>
    </alternativeName>
</protein>
<reference key="1">
    <citation type="journal article" date="2014" name="Stand. Genomic Sci.">
        <title>Complete genome sequence of Anabaena variabilis ATCC 29413.</title>
        <authorList>
            <person name="Thiel T."/>
            <person name="Pratte B.S."/>
            <person name="Zhong J."/>
            <person name="Goodwin L."/>
            <person name="Copeland A."/>
            <person name="Lucas S."/>
            <person name="Han C."/>
            <person name="Pitluck S."/>
            <person name="Land M.L."/>
            <person name="Kyrpides N.C."/>
            <person name="Woyke T."/>
        </authorList>
    </citation>
    <scope>NUCLEOTIDE SEQUENCE [LARGE SCALE GENOMIC DNA]</scope>
    <source>
        <strain>ATCC 29413 / PCC 7937</strain>
    </source>
</reference>
<accession>Q3MEZ3</accession>
<proteinExistence type="inferred from homology"/>
<dbReference type="EC" id="3.1.21.7" evidence="1"/>
<dbReference type="EMBL" id="CP000117">
    <property type="protein sequence ID" value="ABA20443.1"/>
    <property type="molecule type" value="Genomic_DNA"/>
</dbReference>
<dbReference type="SMR" id="Q3MEZ3"/>
<dbReference type="STRING" id="240292.Ava_0819"/>
<dbReference type="KEGG" id="ava:Ava_0819"/>
<dbReference type="eggNOG" id="COG1515">
    <property type="taxonomic scope" value="Bacteria"/>
</dbReference>
<dbReference type="HOGENOM" id="CLU_047631_1_1_3"/>
<dbReference type="Proteomes" id="UP000002533">
    <property type="component" value="Chromosome"/>
</dbReference>
<dbReference type="GO" id="GO:0005737">
    <property type="term" value="C:cytoplasm"/>
    <property type="evidence" value="ECO:0007669"/>
    <property type="project" value="UniProtKB-SubCell"/>
</dbReference>
<dbReference type="GO" id="GO:0043737">
    <property type="term" value="F:deoxyribonuclease V activity"/>
    <property type="evidence" value="ECO:0007669"/>
    <property type="project" value="UniProtKB-UniRule"/>
</dbReference>
<dbReference type="GO" id="GO:0000287">
    <property type="term" value="F:magnesium ion binding"/>
    <property type="evidence" value="ECO:0007669"/>
    <property type="project" value="UniProtKB-UniRule"/>
</dbReference>
<dbReference type="GO" id="GO:0016891">
    <property type="term" value="F:RNA endonuclease activity, producing 5'-phosphomonoesters"/>
    <property type="evidence" value="ECO:0007669"/>
    <property type="project" value="TreeGrafter"/>
</dbReference>
<dbReference type="GO" id="GO:0003727">
    <property type="term" value="F:single-stranded RNA binding"/>
    <property type="evidence" value="ECO:0007669"/>
    <property type="project" value="TreeGrafter"/>
</dbReference>
<dbReference type="GO" id="GO:0006281">
    <property type="term" value="P:DNA repair"/>
    <property type="evidence" value="ECO:0007669"/>
    <property type="project" value="UniProtKB-UniRule"/>
</dbReference>
<dbReference type="CDD" id="cd06559">
    <property type="entry name" value="Endonuclease_V"/>
    <property type="match status" value="1"/>
</dbReference>
<dbReference type="Gene3D" id="3.30.2170.10">
    <property type="entry name" value="archaeoglobus fulgidus dsm 4304 superfamily"/>
    <property type="match status" value="1"/>
</dbReference>
<dbReference type="HAMAP" id="MF_00801">
    <property type="entry name" value="Endonuclease_5"/>
    <property type="match status" value="1"/>
</dbReference>
<dbReference type="InterPro" id="IPR007581">
    <property type="entry name" value="Endonuclease-V"/>
</dbReference>
<dbReference type="NCBIfam" id="NF008629">
    <property type="entry name" value="PRK11617.1"/>
    <property type="match status" value="1"/>
</dbReference>
<dbReference type="PANTHER" id="PTHR28511">
    <property type="entry name" value="ENDONUCLEASE V"/>
    <property type="match status" value="1"/>
</dbReference>
<dbReference type="PANTHER" id="PTHR28511:SF1">
    <property type="entry name" value="ENDONUCLEASE V"/>
    <property type="match status" value="1"/>
</dbReference>
<dbReference type="Pfam" id="PF04493">
    <property type="entry name" value="Endonuclease_5"/>
    <property type="match status" value="1"/>
</dbReference>
<evidence type="ECO:0000255" key="1">
    <source>
        <dbReference type="HAMAP-Rule" id="MF_00801"/>
    </source>
</evidence>